<protein>
    <recommendedName>
        <fullName evidence="1">Large ribosomal subunit protein bL32</fullName>
    </recommendedName>
    <alternativeName>
        <fullName evidence="3">50S ribosomal protein L32</fullName>
    </alternativeName>
</protein>
<sequence>MAVQQNRKTRSRRGMRRSHDALTAAALSVDATSGETHLRHNVTAEGYYRGKKVINK</sequence>
<comment type="similarity">
    <text evidence="1">Belongs to the bacterial ribosomal protein bL32 family.</text>
</comment>
<feature type="chain" id="PRO_1000072067" description="Large ribosomal subunit protein bL32">
    <location>
        <begin position="1"/>
        <end position="56"/>
    </location>
</feature>
<feature type="region of interest" description="Disordered" evidence="2">
    <location>
        <begin position="1"/>
        <end position="21"/>
    </location>
</feature>
<feature type="compositionally biased region" description="Basic residues" evidence="2">
    <location>
        <begin position="7"/>
        <end position="16"/>
    </location>
</feature>
<keyword id="KW-0687">Ribonucleoprotein</keyword>
<keyword id="KW-0689">Ribosomal protein</keyword>
<name>RL32_VIBC3</name>
<evidence type="ECO:0000255" key="1">
    <source>
        <dbReference type="HAMAP-Rule" id="MF_00340"/>
    </source>
</evidence>
<evidence type="ECO:0000256" key="2">
    <source>
        <dbReference type="SAM" id="MobiDB-lite"/>
    </source>
</evidence>
<evidence type="ECO:0000305" key="3"/>
<organism>
    <name type="scientific">Vibrio cholerae serotype O1 (strain ATCC 39541 / Classical Ogawa 395 / O395)</name>
    <dbReference type="NCBI Taxonomy" id="345073"/>
    <lineage>
        <taxon>Bacteria</taxon>
        <taxon>Pseudomonadati</taxon>
        <taxon>Pseudomonadota</taxon>
        <taxon>Gammaproteobacteria</taxon>
        <taxon>Vibrionales</taxon>
        <taxon>Vibrionaceae</taxon>
        <taxon>Vibrio</taxon>
    </lineage>
</organism>
<reference key="1">
    <citation type="submission" date="2007-03" db="EMBL/GenBank/DDBJ databases">
        <authorList>
            <person name="Heidelberg J."/>
        </authorList>
    </citation>
    <scope>NUCLEOTIDE SEQUENCE [LARGE SCALE GENOMIC DNA]</scope>
    <source>
        <strain>ATCC 39541 / Classical Ogawa 395 / O395</strain>
    </source>
</reference>
<reference key="2">
    <citation type="journal article" date="2008" name="PLoS ONE">
        <title>A recalibrated molecular clock and independent origins for the cholera pandemic clones.</title>
        <authorList>
            <person name="Feng L."/>
            <person name="Reeves P.R."/>
            <person name="Lan R."/>
            <person name="Ren Y."/>
            <person name="Gao C."/>
            <person name="Zhou Z."/>
            <person name="Ren Y."/>
            <person name="Cheng J."/>
            <person name="Wang W."/>
            <person name="Wang J."/>
            <person name="Qian W."/>
            <person name="Li D."/>
            <person name="Wang L."/>
        </authorList>
    </citation>
    <scope>NUCLEOTIDE SEQUENCE [LARGE SCALE GENOMIC DNA]</scope>
    <source>
        <strain>ATCC 39541 / Classical Ogawa 395 / O395</strain>
    </source>
</reference>
<proteinExistence type="inferred from homology"/>
<gene>
    <name evidence="1" type="primary">rpmF</name>
    <name type="ordered locus">VC0395_A1611</name>
    <name type="ordered locus">VC395_2140</name>
</gene>
<accession>A5F6P1</accession>
<accession>C3M277</accession>
<dbReference type="EMBL" id="CP000627">
    <property type="protein sequence ID" value="ABQ21308.1"/>
    <property type="molecule type" value="Genomic_DNA"/>
</dbReference>
<dbReference type="EMBL" id="CP001235">
    <property type="protein sequence ID" value="ACP10132.1"/>
    <property type="molecule type" value="Genomic_DNA"/>
</dbReference>
<dbReference type="RefSeq" id="WP_000290732.1">
    <property type="nucleotide sequence ID" value="NZ_JAACZH010000001.1"/>
</dbReference>
<dbReference type="SMR" id="A5F6P1"/>
<dbReference type="GeneID" id="94025234"/>
<dbReference type="KEGG" id="vco:VC0395_A1611"/>
<dbReference type="KEGG" id="vcr:VC395_2140"/>
<dbReference type="PATRIC" id="fig|345073.21.peg.2068"/>
<dbReference type="eggNOG" id="COG0333">
    <property type="taxonomic scope" value="Bacteria"/>
</dbReference>
<dbReference type="HOGENOM" id="CLU_129084_2_1_6"/>
<dbReference type="OrthoDB" id="9801927at2"/>
<dbReference type="Proteomes" id="UP000000249">
    <property type="component" value="Chromosome 2"/>
</dbReference>
<dbReference type="GO" id="GO:0015934">
    <property type="term" value="C:large ribosomal subunit"/>
    <property type="evidence" value="ECO:0007669"/>
    <property type="project" value="InterPro"/>
</dbReference>
<dbReference type="GO" id="GO:0003735">
    <property type="term" value="F:structural constituent of ribosome"/>
    <property type="evidence" value="ECO:0007669"/>
    <property type="project" value="InterPro"/>
</dbReference>
<dbReference type="GO" id="GO:0006412">
    <property type="term" value="P:translation"/>
    <property type="evidence" value="ECO:0007669"/>
    <property type="project" value="UniProtKB-UniRule"/>
</dbReference>
<dbReference type="HAMAP" id="MF_00340">
    <property type="entry name" value="Ribosomal_bL32"/>
    <property type="match status" value="1"/>
</dbReference>
<dbReference type="InterPro" id="IPR002677">
    <property type="entry name" value="Ribosomal_bL32"/>
</dbReference>
<dbReference type="InterPro" id="IPR044957">
    <property type="entry name" value="Ribosomal_bL32_bact"/>
</dbReference>
<dbReference type="InterPro" id="IPR011332">
    <property type="entry name" value="Ribosomal_zn-bd"/>
</dbReference>
<dbReference type="NCBIfam" id="TIGR01031">
    <property type="entry name" value="rpmF_bact"/>
    <property type="match status" value="1"/>
</dbReference>
<dbReference type="PANTHER" id="PTHR35534">
    <property type="entry name" value="50S RIBOSOMAL PROTEIN L32"/>
    <property type="match status" value="1"/>
</dbReference>
<dbReference type="PANTHER" id="PTHR35534:SF1">
    <property type="entry name" value="LARGE RIBOSOMAL SUBUNIT PROTEIN BL32"/>
    <property type="match status" value="1"/>
</dbReference>
<dbReference type="Pfam" id="PF01783">
    <property type="entry name" value="Ribosomal_L32p"/>
    <property type="match status" value="1"/>
</dbReference>
<dbReference type="SUPFAM" id="SSF57829">
    <property type="entry name" value="Zn-binding ribosomal proteins"/>
    <property type="match status" value="1"/>
</dbReference>